<keyword id="KW-0997">Cell inner membrane</keyword>
<keyword id="KW-1003">Cell membrane</keyword>
<keyword id="KW-0472">Membrane</keyword>
<keyword id="KW-0520">NAD</keyword>
<keyword id="KW-0874">Quinone</keyword>
<keyword id="KW-1185">Reference proteome</keyword>
<keyword id="KW-1278">Translocase</keyword>
<keyword id="KW-0812">Transmembrane</keyword>
<keyword id="KW-1133">Transmembrane helix</keyword>
<keyword id="KW-0813">Transport</keyword>
<keyword id="KW-0830">Ubiquinone</keyword>
<organism>
    <name type="scientific">Methylovorus glucosotrophus (strain SIP3-4)</name>
    <dbReference type="NCBI Taxonomy" id="582744"/>
    <lineage>
        <taxon>Bacteria</taxon>
        <taxon>Pseudomonadati</taxon>
        <taxon>Pseudomonadota</taxon>
        <taxon>Betaproteobacteria</taxon>
        <taxon>Nitrosomonadales</taxon>
        <taxon>Methylophilaceae</taxon>
        <taxon>Methylovorus</taxon>
    </lineage>
</organism>
<name>NUOK_METGS</name>
<feature type="chain" id="PRO_0000390123" description="NADH-quinone oxidoreductase subunit K">
    <location>
        <begin position="1"/>
        <end position="101"/>
    </location>
</feature>
<feature type="transmembrane region" description="Helical" evidence="1">
    <location>
        <begin position="4"/>
        <end position="24"/>
    </location>
</feature>
<feature type="transmembrane region" description="Helical" evidence="1">
    <location>
        <begin position="30"/>
        <end position="50"/>
    </location>
</feature>
<feature type="transmembrane region" description="Helical" evidence="1">
    <location>
        <begin position="61"/>
        <end position="81"/>
    </location>
</feature>
<protein>
    <recommendedName>
        <fullName evidence="1">NADH-quinone oxidoreductase subunit K</fullName>
        <ecNumber evidence="1">7.1.1.-</ecNumber>
    </recommendedName>
    <alternativeName>
        <fullName evidence="1">NADH dehydrogenase I subunit K</fullName>
    </alternativeName>
    <alternativeName>
        <fullName evidence="1">NDH-1 subunit K</fullName>
    </alternativeName>
</protein>
<evidence type="ECO:0000255" key="1">
    <source>
        <dbReference type="HAMAP-Rule" id="MF_01456"/>
    </source>
</evidence>
<accession>C6XAJ7</accession>
<reference key="1">
    <citation type="submission" date="2009-07" db="EMBL/GenBank/DDBJ databases">
        <title>Complete sequence of chromosome of Methylovorus sp. SIP3-4.</title>
        <authorList>
            <person name="Lucas S."/>
            <person name="Copeland A."/>
            <person name="Lapidus A."/>
            <person name="Glavina del Rio T."/>
            <person name="Tice H."/>
            <person name="Bruce D."/>
            <person name="Goodwin L."/>
            <person name="Pitluck S."/>
            <person name="Clum A."/>
            <person name="Larimer F."/>
            <person name="Land M."/>
            <person name="Hauser L."/>
            <person name="Kyrpides N."/>
            <person name="Mikhailova N."/>
            <person name="Kayluzhnaya M."/>
            <person name="Chistoserdova L."/>
        </authorList>
    </citation>
    <scope>NUCLEOTIDE SEQUENCE [LARGE SCALE GENOMIC DNA]</scope>
    <source>
        <strain>SIP3-4</strain>
    </source>
</reference>
<gene>
    <name evidence="1" type="primary">nuoK</name>
    <name type="ordered locus">Msip34_0681</name>
</gene>
<dbReference type="EC" id="7.1.1.-" evidence="1"/>
<dbReference type="EMBL" id="CP001674">
    <property type="protein sequence ID" value="ACT49929.1"/>
    <property type="molecule type" value="Genomic_DNA"/>
</dbReference>
<dbReference type="RefSeq" id="WP_013441515.1">
    <property type="nucleotide sequence ID" value="NC_012969.1"/>
</dbReference>
<dbReference type="SMR" id="C6XAJ7"/>
<dbReference type="STRING" id="582744.Msip34_0681"/>
<dbReference type="KEGG" id="mei:Msip34_0681"/>
<dbReference type="eggNOG" id="COG0713">
    <property type="taxonomic scope" value="Bacteria"/>
</dbReference>
<dbReference type="HOGENOM" id="CLU_144724_2_0_4"/>
<dbReference type="OrthoDB" id="9801357at2"/>
<dbReference type="Proteomes" id="UP000002743">
    <property type="component" value="Chromosome"/>
</dbReference>
<dbReference type="GO" id="GO:0030964">
    <property type="term" value="C:NADH dehydrogenase complex"/>
    <property type="evidence" value="ECO:0007669"/>
    <property type="project" value="TreeGrafter"/>
</dbReference>
<dbReference type="GO" id="GO:0005886">
    <property type="term" value="C:plasma membrane"/>
    <property type="evidence" value="ECO:0007669"/>
    <property type="project" value="UniProtKB-SubCell"/>
</dbReference>
<dbReference type="GO" id="GO:0050136">
    <property type="term" value="F:NADH:ubiquinone reductase (non-electrogenic) activity"/>
    <property type="evidence" value="ECO:0007669"/>
    <property type="project" value="UniProtKB-UniRule"/>
</dbReference>
<dbReference type="GO" id="GO:0048038">
    <property type="term" value="F:quinone binding"/>
    <property type="evidence" value="ECO:0007669"/>
    <property type="project" value="UniProtKB-KW"/>
</dbReference>
<dbReference type="GO" id="GO:0042773">
    <property type="term" value="P:ATP synthesis coupled electron transport"/>
    <property type="evidence" value="ECO:0007669"/>
    <property type="project" value="InterPro"/>
</dbReference>
<dbReference type="FunFam" id="1.10.287.3510:FF:000001">
    <property type="entry name" value="NADH-quinone oxidoreductase subunit K"/>
    <property type="match status" value="1"/>
</dbReference>
<dbReference type="Gene3D" id="1.10.287.3510">
    <property type="match status" value="1"/>
</dbReference>
<dbReference type="HAMAP" id="MF_01456">
    <property type="entry name" value="NDH1_NuoK"/>
    <property type="match status" value="1"/>
</dbReference>
<dbReference type="InterPro" id="IPR001133">
    <property type="entry name" value="NADH_UbQ_OxRdtase_chain4L/K"/>
</dbReference>
<dbReference type="InterPro" id="IPR039428">
    <property type="entry name" value="NUOK/Mnh_C1-like"/>
</dbReference>
<dbReference type="NCBIfam" id="NF004320">
    <property type="entry name" value="PRK05715.1-2"/>
    <property type="match status" value="1"/>
</dbReference>
<dbReference type="NCBIfam" id="NF004321">
    <property type="entry name" value="PRK05715.1-3"/>
    <property type="match status" value="1"/>
</dbReference>
<dbReference type="NCBIfam" id="NF004323">
    <property type="entry name" value="PRK05715.1-5"/>
    <property type="match status" value="1"/>
</dbReference>
<dbReference type="PANTHER" id="PTHR11434:SF21">
    <property type="entry name" value="NADH DEHYDROGENASE SUBUNIT 4L-RELATED"/>
    <property type="match status" value="1"/>
</dbReference>
<dbReference type="PANTHER" id="PTHR11434">
    <property type="entry name" value="NADH-UBIQUINONE OXIDOREDUCTASE SUBUNIT ND4L"/>
    <property type="match status" value="1"/>
</dbReference>
<dbReference type="Pfam" id="PF00420">
    <property type="entry name" value="Oxidored_q2"/>
    <property type="match status" value="1"/>
</dbReference>
<proteinExistence type="inferred from homology"/>
<sequence length="101" mass="11008">MVGLSHYLILGSLLFAISVVGIFLNRKNVIVLLMAIELMLLAVNLNFIAFSHYLQDTAGQVFVFFILTVAAAESAIGLAILVVLFRNLKTINVDDINSLKG</sequence>
<comment type="function">
    <text evidence="1">NDH-1 shuttles electrons from NADH, via FMN and iron-sulfur (Fe-S) centers, to quinones in the respiratory chain. The immediate electron acceptor for the enzyme in this species is believed to be ubiquinone. Couples the redox reaction to proton translocation (for every two electrons transferred, four hydrogen ions are translocated across the cytoplasmic membrane), and thus conserves the redox energy in a proton gradient.</text>
</comment>
<comment type="catalytic activity">
    <reaction evidence="1">
        <text>a quinone + NADH + 5 H(+)(in) = a quinol + NAD(+) + 4 H(+)(out)</text>
        <dbReference type="Rhea" id="RHEA:57888"/>
        <dbReference type="ChEBI" id="CHEBI:15378"/>
        <dbReference type="ChEBI" id="CHEBI:24646"/>
        <dbReference type="ChEBI" id="CHEBI:57540"/>
        <dbReference type="ChEBI" id="CHEBI:57945"/>
        <dbReference type="ChEBI" id="CHEBI:132124"/>
    </reaction>
</comment>
<comment type="subunit">
    <text evidence="1">NDH-1 is composed of 14 different subunits. Subunits NuoA, H, J, K, L, M, N constitute the membrane sector of the complex.</text>
</comment>
<comment type="subcellular location">
    <subcellularLocation>
        <location evidence="1">Cell inner membrane</location>
        <topology evidence="1">Multi-pass membrane protein</topology>
    </subcellularLocation>
</comment>
<comment type="similarity">
    <text evidence="1">Belongs to the complex I subunit 4L family.</text>
</comment>